<reference key="1">
    <citation type="submission" date="2007-06" db="EMBL/GenBank/DDBJ databases">
        <authorList>
            <person name="Dodson R.J."/>
            <person name="Harkins D."/>
            <person name="Paulsen I.T."/>
        </authorList>
    </citation>
    <scope>NUCLEOTIDE SEQUENCE [LARGE SCALE GENOMIC DNA]</scope>
    <source>
        <strain>DSM 24068 / PA7</strain>
    </source>
</reference>
<feature type="chain" id="PRO_1000069565" description="Fatty acid oxidation complex subunit alpha">
    <location>
        <begin position="1"/>
        <end position="715"/>
    </location>
</feature>
<feature type="region of interest" description="Enoyl-CoA hydratase/isomerase" evidence="1">
    <location>
        <begin position="1"/>
        <end position="190"/>
    </location>
</feature>
<feature type="region of interest" description="3-hydroxyacyl-CoA dehydrogenase" evidence="1">
    <location>
        <begin position="312"/>
        <end position="715"/>
    </location>
</feature>
<feature type="active site" description="For 3-hydroxyacyl-CoA dehydrogenase activity" evidence="1">
    <location>
        <position position="451"/>
    </location>
</feature>
<feature type="binding site" evidence="1">
    <location>
        <position position="297"/>
    </location>
    <ligand>
        <name>substrate</name>
    </ligand>
</feature>
<feature type="binding site" evidence="1">
    <location>
        <position position="325"/>
    </location>
    <ligand>
        <name>NAD(+)</name>
        <dbReference type="ChEBI" id="CHEBI:57540"/>
    </ligand>
</feature>
<feature type="binding site" evidence="1">
    <location>
        <position position="344"/>
    </location>
    <ligand>
        <name>NAD(+)</name>
        <dbReference type="ChEBI" id="CHEBI:57540"/>
    </ligand>
</feature>
<feature type="binding site" evidence="1">
    <location>
        <begin position="401"/>
        <end position="403"/>
    </location>
    <ligand>
        <name>NAD(+)</name>
        <dbReference type="ChEBI" id="CHEBI:57540"/>
    </ligand>
</feature>
<feature type="binding site" evidence="1">
    <location>
        <position position="408"/>
    </location>
    <ligand>
        <name>NAD(+)</name>
        <dbReference type="ChEBI" id="CHEBI:57540"/>
    </ligand>
</feature>
<feature type="binding site" evidence="1">
    <location>
        <position position="430"/>
    </location>
    <ligand>
        <name>NAD(+)</name>
        <dbReference type="ChEBI" id="CHEBI:57540"/>
    </ligand>
</feature>
<feature type="binding site" evidence="1">
    <location>
        <position position="454"/>
    </location>
    <ligand>
        <name>NAD(+)</name>
        <dbReference type="ChEBI" id="CHEBI:57540"/>
    </ligand>
</feature>
<feature type="binding site" evidence="1">
    <location>
        <position position="501"/>
    </location>
    <ligand>
        <name>substrate</name>
    </ligand>
</feature>
<feature type="binding site" evidence="1">
    <location>
        <position position="660"/>
    </location>
    <ligand>
        <name>substrate</name>
    </ligand>
</feature>
<feature type="site" description="Important for catalytic activity" evidence="1">
    <location>
        <position position="120"/>
    </location>
</feature>
<feature type="site" description="Important for catalytic activity" evidence="1">
    <location>
        <position position="140"/>
    </location>
</feature>
<accession>A6V382</accession>
<evidence type="ECO:0000255" key="1">
    <source>
        <dbReference type="HAMAP-Rule" id="MF_01621"/>
    </source>
</evidence>
<protein>
    <recommendedName>
        <fullName evidence="1">Fatty acid oxidation complex subunit alpha</fullName>
    </recommendedName>
    <domain>
        <recommendedName>
            <fullName evidence="1">Enoyl-CoA hydratase/Delta(3)-cis-Delta(2)-trans-enoyl-CoA isomerase/3-hydroxybutyryl-CoA epimerase</fullName>
            <ecNumber evidence="1">4.2.1.17</ecNumber>
            <ecNumber evidence="1">5.1.2.3</ecNumber>
            <ecNumber evidence="1">5.3.3.8</ecNumber>
        </recommendedName>
    </domain>
    <domain>
        <recommendedName>
            <fullName evidence="1">3-hydroxyacyl-CoA dehydrogenase</fullName>
            <ecNumber evidence="1">1.1.1.35</ecNumber>
        </recommendedName>
    </domain>
</protein>
<keyword id="KW-0276">Fatty acid metabolism</keyword>
<keyword id="KW-0413">Isomerase</keyword>
<keyword id="KW-0442">Lipid degradation</keyword>
<keyword id="KW-0443">Lipid metabolism</keyword>
<keyword id="KW-0456">Lyase</keyword>
<keyword id="KW-0511">Multifunctional enzyme</keyword>
<keyword id="KW-0520">NAD</keyword>
<keyword id="KW-0560">Oxidoreductase</keyword>
<dbReference type="EC" id="4.2.1.17" evidence="1"/>
<dbReference type="EC" id="5.1.2.3" evidence="1"/>
<dbReference type="EC" id="5.3.3.8" evidence="1"/>
<dbReference type="EC" id="1.1.1.35" evidence="1"/>
<dbReference type="EMBL" id="CP000744">
    <property type="protein sequence ID" value="ABR83067.1"/>
    <property type="molecule type" value="Genomic_DNA"/>
</dbReference>
<dbReference type="RefSeq" id="WP_012075144.1">
    <property type="nucleotide sequence ID" value="NC_009656.1"/>
</dbReference>
<dbReference type="SMR" id="A6V382"/>
<dbReference type="KEGG" id="pap:PSPA7_2145"/>
<dbReference type="HOGENOM" id="CLU_009834_16_3_6"/>
<dbReference type="UniPathway" id="UPA00659"/>
<dbReference type="Proteomes" id="UP000001582">
    <property type="component" value="Chromosome"/>
</dbReference>
<dbReference type="GO" id="GO:0036125">
    <property type="term" value="C:fatty acid beta-oxidation multienzyme complex"/>
    <property type="evidence" value="ECO:0007669"/>
    <property type="project" value="InterPro"/>
</dbReference>
<dbReference type="GO" id="GO:0008692">
    <property type="term" value="F:3-hydroxybutyryl-CoA epimerase activity"/>
    <property type="evidence" value="ECO:0007669"/>
    <property type="project" value="UniProtKB-UniRule"/>
</dbReference>
<dbReference type="GO" id="GO:0004165">
    <property type="term" value="F:delta(3)-delta(2)-enoyl-CoA isomerase activity"/>
    <property type="evidence" value="ECO:0007669"/>
    <property type="project" value="UniProtKB-UniRule"/>
</dbReference>
<dbReference type="GO" id="GO:0004300">
    <property type="term" value="F:enoyl-CoA hydratase activity"/>
    <property type="evidence" value="ECO:0007669"/>
    <property type="project" value="UniProtKB-UniRule"/>
</dbReference>
<dbReference type="GO" id="GO:0016509">
    <property type="term" value="F:long-chain-3-hydroxyacyl-CoA dehydrogenase activity"/>
    <property type="evidence" value="ECO:0007669"/>
    <property type="project" value="TreeGrafter"/>
</dbReference>
<dbReference type="GO" id="GO:0070403">
    <property type="term" value="F:NAD+ binding"/>
    <property type="evidence" value="ECO:0007669"/>
    <property type="project" value="InterPro"/>
</dbReference>
<dbReference type="GO" id="GO:0006635">
    <property type="term" value="P:fatty acid beta-oxidation"/>
    <property type="evidence" value="ECO:0007669"/>
    <property type="project" value="UniProtKB-UniRule"/>
</dbReference>
<dbReference type="CDD" id="cd06558">
    <property type="entry name" value="crotonase-like"/>
    <property type="match status" value="1"/>
</dbReference>
<dbReference type="FunFam" id="1.10.1040.50:FF:000001">
    <property type="entry name" value="Fatty acid oxidation complex subunit alpha"/>
    <property type="match status" value="1"/>
</dbReference>
<dbReference type="FunFam" id="3.90.226.10:FF:000018">
    <property type="entry name" value="Fatty acid oxidation complex subunit alpha"/>
    <property type="match status" value="1"/>
</dbReference>
<dbReference type="FunFam" id="3.40.50.720:FF:000009">
    <property type="entry name" value="Fatty oxidation complex, alpha subunit"/>
    <property type="match status" value="1"/>
</dbReference>
<dbReference type="Gene3D" id="1.10.1040.50">
    <property type="match status" value="1"/>
</dbReference>
<dbReference type="Gene3D" id="3.90.226.10">
    <property type="entry name" value="2-enoyl-CoA Hydratase, Chain A, domain 1"/>
    <property type="match status" value="1"/>
</dbReference>
<dbReference type="Gene3D" id="3.40.50.720">
    <property type="entry name" value="NAD(P)-binding Rossmann-like Domain"/>
    <property type="match status" value="1"/>
</dbReference>
<dbReference type="HAMAP" id="MF_01621">
    <property type="entry name" value="FadB"/>
    <property type="match status" value="1"/>
</dbReference>
<dbReference type="InterPro" id="IPR006180">
    <property type="entry name" value="3-OHacyl-CoA_DH_CS"/>
</dbReference>
<dbReference type="InterPro" id="IPR006176">
    <property type="entry name" value="3-OHacyl-CoA_DH_NAD-bd"/>
</dbReference>
<dbReference type="InterPro" id="IPR006108">
    <property type="entry name" value="3HC_DH_C"/>
</dbReference>
<dbReference type="InterPro" id="IPR008927">
    <property type="entry name" value="6-PGluconate_DH-like_C_sf"/>
</dbReference>
<dbReference type="InterPro" id="IPR029045">
    <property type="entry name" value="ClpP/crotonase-like_dom_sf"/>
</dbReference>
<dbReference type="InterPro" id="IPR018376">
    <property type="entry name" value="Enoyl-CoA_hyd/isom_CS"/>
</dbReference>
<dbReference type="InterPro" id="IPR001753">
    <property type="entry name" value="Enoyl-CoA_hydra/iso"/>
</dbReference>
<dbReference type="InterPro" id="IPR050136">
    <property type="entry name" value="FA_oxidation_alpha_subunit"/>
</dbReference>
<dbReference type="InterPro" id="IPR012799">
    <property type="entry name" value="FadB"/>
</dbReference>
<dbReference type="InterPro" id="IPR036291">
    <property type="entry name" value="NAD(P)-bd_dom_sf"/>
</dbReference>
<dbReference type="NCBIfam" id="TIGR02437">
    <property type="entry name" value="FadB"/>
    <property type="match status" value="1"/>
</dbReference>
<dbReference type="NCBIfam" id="NF008727">
    <property type="entry name" value="PRK11730.1"/>
    <property type="match status" value="1"/>
</dbReference>
<dbReference type="PANTHER" id="PTHR43612">
    <property type="entry name" value="TRIFUNCTIONAL ENZYME SUBUNIT ALPHA"/>
    <property type="match status" value="1"/>
</dbReference>
<dbReference type="PANTHER" id="PTHR43612:SF3">
    <property type="entry name" value="TRIFUNCTIONAL ENZYME SUBUNIT ALPHA, MITOCHONDRIAL"/>
    <property type="match status" value="1"/>
</dbReference>
<dbReference type="Pfam" id="PF00725">
    <property type="entry name" value="3HCDH"/>
    <property type="match status" value="1"/>
</dbReference>
<dbReference type="Pfam" id="PF02737">
    <property type="entry name" value="3HCDH_N"/>
    <property type="match status" value="1"/>
</dbReference>
<dbReference type="Pfam" id="PF00378">
    <property type="entry name" value="ECH_1"/>
    <property type="match status" value="1"/>
</dbReference>
<dbReference type="SUPFAM" id="SSF48179">
    <property type="entry name" value="6-phosphogluconate dehydrogenase C-terminal domain-like"/>
    <property type="match status" value="2"/>
</dbReference>
<dbReference type="SUPFAM" id="SSF52096">
    <property type="entry name" value="ClpP/crotonase"/>
    <property type="match status" value="1"/>
</dbReference>
<dbReference type="SUPFAM" id="SSF51735">
    <property type="entry name" value="NAD(P)-binding Rossmann-fold domains"/>
    <property type="match status" value="1"/>
</dbReference>
<dbReference type="PROSITE" id="PS00067">
    <property type="entry name" value="3HCDH"/>
    <property type="match status" value="1"/>
</dbReference>
<dbReference type="PROSITE" id="PS00166">
    <property type="entry name" value="ENOYL_COA_HYDRATASE"/>
    <property type="match status" value="1"/>
</dbReference>
<gene>
    <name evidence="1" type="primary">fadB</name>
    <name type="ordered locus">PSPA7_2145</name>
</gene>
<name>FADB_PSEP7</name>
<comment type="function">
    <text evidence="1">Involved in the aerobic and anaerobic degradation of long-chain fatty acids via beta-oxidation cycle. Catalyzes the formation of 3-oxoacyl-CoA from enoyl-CoA via L-3-hydroxyacyl-CoA. It can also use D-3-hydroxyacyl-CoA and cis-3-enoyl-CoA as substrate.</text>
</comment>
<comment type="catalytic activity">
    <reaction evidence="1">
        <text>a (3S)-3-hydroxyacyl-CoA + NAD(+) = a 3-oxoacyl-CoA + NADH + H(+)</text>
        <dbReference type="Rhea" id="RHEA:22432"/>
        <dbReference type="ChEBI" id="CHEBI:15378"/>
        <dbReference type="ChEBI" id="CHEBI:57318"/>
        <dbReference type="ChEBI" id="CHEBI:57540"/>
        <dbReference type="ChEBI" id="CHEBI:57945"/>
        <dbReference type="ChEBI" id="CHEBI:90726"/>
        <dbReference type="EC" id="1.1.1.35"/>
    </reaction>
</comment>
<comment type="catalytic activity">
    <reaction evidence="1">
        <text>a (3S)-3-hydroxyacyl-CoA = a (2E)-enoyl-CoA + H2O</text>
        <dbReference type="Rhea" id="RHEA:16105"/>
        <dbReference type="ChEBI" id="CHEBI:15377"/>
        <dbReference type="ChEBI" id="CHEBI:57318"/>
        <dbReference type="ChEBI" id="CHEBI:58856"/>
        <dbReference type="EC" id="4.2.1.17"/>
    </reaction>
</comment>
<comment type="catalytic activity">
    <reaction evidence="1">
        <text>a 4-saturated-(3S)-3-hydroxyacyl-CoA = a (3E)-enoyl-CoA + H2O</text>
        <dbReference type="Rhea" id="RHEA:20724"/>
        <dbReference type="ChEBI" id="CHEBI:15377"/>
        <dbReference type="ChEBI" id="CHEBI:58521"/>
        <dbReference type="ChEBI" id="CHEBI:137480"/>
        <dbReference type="EC" id="4.2.1.17"/>
    </reaction>
</comment>
<comment type="catalytic activity">
    <reaction evidence="1">
        <text>(3S)-3-hydroxybutanoyl-CoA = (3R)-3-hydroxybutanoyl-CoA</text>
        <dbReference type="Rhea" id="RHEA:21760"/>
        <dbReference type="ChEBI" id="CHEBI:57315"/>
        <dbReference type="ChEBI" id="CHEBI:57316"/>
        <dbReference type="EC" id="5.1.2.3"/>
    </reaction>
</comment>
<comment type="catalytic activity">
    <reaction evidence="1">
        <text>a (3Z)-enoyl-CoA = a 4-saturated (2E)-enoyl-CoA</text>
        <dbReference type="Rhea" id="RHEA:45900"/>
        <dbReference type="ChEBI" id="CHEBI:85097"/>
        <dbReference type="ChEBI" id="CHEBI:85489"/>
        <dbReference type="EC" id="5.3.3.8"/>
    </reaction>
</comment>
<comment type="catalytic activity">
    <reaction evidence="1">
        <text>a (3E)-enoyl-CoA = a 4-saturated (2E)-enoyl-CoA</text>
        <dbReference type="Rhea" id="RHEA:45228"/>
        <dbReference type="ChEBI" id="CHEBI:58521"/>
        <dbReference type="ChEBI" id="CHEBI:85097"/>
        <dbReference type="EC" id="5.3.3.8"/>
    </reaction>
</comment>
<comment type="pathway">
    <text evidence="1">Lipid metabolism; fatty acid beta-oxidation.</text>
</comment>
<comment type="subunit">
    <text evidence="1">Heterotetramer of two alpha chains (FadB) and two beta chains (FadA).</text>
</comment>
<comment type="similarity">
    <text evidence="1">In the N-terminal section; belongs to the enoyl-CoA hydratase/isomerase family.</text>
</comment>
<comment type="similarity">
    <text evidence="1">In the C-terminal section; belongs to the 3-hydroxyacyl-CoA dehydrogenase family.</text>
</comment>
<sequence>MIYQGKAITVKPLEGGIVELNFDLKGESVNKFNRLTLSELRAAVDAIKADAAVKGVIVTSGKDVFIVGADITEFVDNFQLPDEELMAGNLEANKIFSDFEDLDVPTVAAINGIALGGGLEMCLAADFRVMSATAKVGLPEVKLGIYPGFGGTVRLPRLIGCDNAVEWIASGKENKAEDALKVGAVDAVVAPEQLQAAALDLAKRAVAGELDHKARRQPKLEKLKLNAIEQMMAFETAKGFVAGQAGPNYPAPVEAIKSIQKAANFGRDKALEVEAAGFVKLAKTSVAQSLIGLFLNDQELKKKAKKYDEVAKDVKLAAVLGAGIMGGGIAYQSALKGTPILMKDIREEGIQMGLNEAAKLLGKRVEKGRLTPAKMAEALNGIRPTMSYGDFGNVDIVVEAVVENPKVKQAVLAEVEGAVKEDAIIASNTSTISISLLAQALKRPENFCGMHFFNPVHMMPLVEVIRGEKTGETAIATTVAYAKKMGKSPIVVNDCPGFLVNRVLFPYFGGFAKLLGFGVDFVRIDKVMEKFGWPMGPAYLSDVVGIDTGHHGRDVMAEGFPDRMAVEGKTAVDVMYEANRLGQKNGKGFYAYETDKRGKPKKVTDPQAYEVLKPIVVEQREVTDEDIVNFMMIPLCLETVRCLEDGIVETAAEADMGLIYGIGFPPFRGGALRYIDSIGVAEFVALADKYAELGALYHPTAKLREMAKNGQKFFG</sequence>
<proteinExistence type="inferred from homology"/>
<organism>
    <name type="scientific">Pseudomonas paraeruginosa (strain DSM 24068 / PA7)</name>
    <name type="common">Pseudomonas aeruginosa (strain PA7)</name>
    <dbReference type="NCBI Taxonomy" id="381754"/>
    <lineage>
        <taxon>Bacteria</taxon>
        <taxon>Pseudomonadati</taxon>
        <taxon>Pseudomonadota</taxon>
        <taxon>Gammaproteobacteria</taxon>
        <taxon>Pseudomonadales</taxon>
        <taxon>Pseudomonadaceae</taxon>
        <taxon>Pseudomonas</taxon>
        <taxon>Pseudomonas paraeruginosa</taxon>
    </lineage>
</organism>